<accession>P93209</accession>
<accession>P42651</accession>
<accession>Q9SCA7</accession>
<comment type="subunit">
    <text evidence="1">Homodimer.</text>
</comment>
<comment type="similarity">
    <text evidence="1">Belongs to the 14-3-3 family.</text>
</comment>
<comment type="sequence caution" evidence="1">
    <conflict type="erroneous initiation">
        <sequence resource="EMBL-CDS" id="AAA99430"/>
    </conflict>
</comment>
<reference key="1">
    <citation type="journal article" date="1999" name="Plant Physiol.">
        <title>Fusicoccin, 14-3-3 proteins, and defense responses in tomato plants.</title>
        <authorList>
            <person name="Roberts M.R."/>
            <person name="Bowles D.J."/>
        </authorList>
    </citation>
    <scope>NUCLEOTIDE SEQUENCE [GENOMIC DNA]</scope>
    <source>
        <strain>cv. Moneymaker</strain>
        <tissue>Leaf</tissue>
    </source>
</reference>
<reference key="2">
    <citation type="submission" date="2000-01" db="EMBL/GenBank/DDBJ databases">
        <title>Isolation and characterization of cDNAs expressed during early development of tomato fruit by mRNA differential display.</title>
        <authorList>
            <person name="Lemaire-Chamley M."/>
            <person name="Petit J."/>
            <person name="Causse M."/>
            <person name="Raymond P."/>
            <person name="Chevalier C."/>
        </authorList>
    </citation>
    <scope>NUCLEOTIDE SEQUENCE OF 11-240</scope>
    <source>
        <strain>cv. West Virginia 106</strain>
        <tissue>Fruit</tissue>
    </source>
</reference>
<reference key="3">
    <citation type="journal article" date="1995" name="Biochim. Biophys. Acta">
        <title>Two cDNA clones encoding 14-3-3 homologs from tomato fruit.</title>
        <authorList>
            <person name="Laughner B."/>
            <person name="Lawrence S.D."/>
            <person name="Ferl R.J."/>
        </authorList>
    </citation>
    <scope>NUCLEOTIDE SEQUENCE [MRNA] OF 30-260</scope>
    <source>
        <strain>cv. Ailsa Craig</strain>
        <tissue>Fruit</tissue>
    </source>
</reference>
<organism>
    <name type="scientific">Solanum lycopersicum</name>
    <name type="common">Tomato</name>
    <name type="synonym">Lycopersicon esculentum</name>
    <dbReference type="NCBI Taxonomy" id="4081"/>
    <lineage>
        <taxon>Eukaryota</taxon>
        <taxon>Viridiplantae</taxon>
        <taxon>Streptophyta</taxon>
        <taxon>Embryophyta</taxon>
        <taxon>Tracheophyta</taxon>
        <taxon>Spermatophyta</taxon>
        <taxon>Magnoliopsida</taxon>
        <taxon>eudicotyledons</taxon>
        <taxon>Gunneridae</taxon>
        <taxon>Pentapetalae</taxon>
        <taxon>asterids</taxon>
        <taxon>lamiids</taxon>
        <taxon>Solanales</taxon>
        <taxon>Solanaceae</taxon>
        <taxon>Solanoideae</taxon>
        <taxon>Solaneae</taxon>
        <taxon>Solanum</taxon>
        <taxon>Solanum subgen. Lycopersicon</taxon>
    </lineage>
</organism>
<gene>
    <name type="primary">TFT3</name>
</gene>
<sequence>MAVVAPTAREENVYMAKLADRAESDEEMVEFMEKVSNSLGSEELTVEERNLLSVAYKNVIGARRASWRIISSIEQKEESRGNEEHVNSIREYRSKIENELSKICDGILKLLDSKLIPSATSGDSKVFYLKMKGDYHRYLAEFKTGAERKEAAESTLTAYKAAQDIASAELAPTHPIRLGLALNFSVFYYEILNSPDRACNLAKQAFDEAIAELDTLGEESYKDSTLIMQLLRDNLTLWTSDMQDDGADEIKEDPKPEEKN</sequence>
<protein>
    <recommendedName>
        <fullName>14-3-3 protein 3</fullName>
    </recommendedName>
    <alternativeName>
        <fullName>PBLT3</fullName>
    </alternativeName>
</protein>
<name>14333_SOLLC</name>
<dbReference type="EMBL" id="X95902">
    <property type="protein sequence ID" value="CAA65147.1"/>
    <property type="molecule type" value="Genomic_DNA"/>
</dbReference>
<dbReference type="EMBL" id="AJ270959">
    <property type="protein sequence ID" value="CAB65693.1"/>
    <property type="molecule type" value="mRNA"/>
</dbReference>
<dbReference type="EMBL" id="L29151">
    <property type="protein sequence ID" value="AAA99430.1"/>
    <property type="status" value="ALT_INIT"/>
    <property type="molecule type" value="mRNA"/>
</dbReference>
<dbReference type="PIR" id="S57271">
    <property type="entry name" value="S57271"/>
</dbReference>
<dbReference type="PIR" id="T07388">
    <property type="entry name" value="T07388"/>
</dbReference>
<dbReference type="SMR" id="P93209"/>
<dbReference type="STRING" id="4081.P93209"/>
<dbReference type="PaxDb" id="4081-Solyc04g074510.2.1"/>
<dbReference type="eggNOG" id="KOG0841">
    <property type="taxonomic scope" value="Eukaryota"/>
</dbReference>
<dbReference type="InParanoid" id="P93209"/>
<dbReference type="Proteomes" id="UP000004994">
    <property type="component" value="Unplaced"/>
</dbReference>
<dbReference type="ExpressionAtlas" id="P93209">
    <property type="expression patterns" value="baseline and differential"/>
</dbReference>
<dbReference type="GO" id="GO:0005737">
    <property type="term" value="C:cytoplasm"/>
    <property type="evidence" value="ECO:0000318"/>
    <property type="project" value="GO_Central"/>
</dbReference>
<dbReference type="GO" id="GO:0008104">
    <property type="term" value="P:protein localization"/>
    <property type="evidence" value="ECO:0000318"/>
    <property type="project" value="GO_Central"/>
</dbReference>
<dbReference type="GO" id="GO:0007165">
    <property type="term" value="P:signal transduction"/>
    <property type="evidence" value="ECO:0000318"/>
    <property type="project" value="GO_Central"/>
</dbReference>
<dbReference type="FunFam" id="1.20.190.20:FF:000002">
    <property type="entry name" value="14-3-3 protein epsilon"/>
    <property type="match status" value="1"/>
</dbReference>
<dbReference type="Gene3D" id="1.20.190.20">
    <property type="entry name" value="14-3-3 domain"/>
    <property type="match status" value="1"/>
</dbReference>
<dbReference type="InterPro" id="IPR000308">
    <property type="entry name" value="14-3-3"/>
</dbReference>
<dbReference type="InterPro" id="IPR023409">
    <property type="entry name" value="14-3-3_CS"/>
</dbReference>
<dbReference type="InterPro" id="IPR036815">
    <property type="entry name" value="14-3-3_dom_sf"/>
</dbReference>
<dbReference type="InterPro" id="IPR023410">
    <property type="entry name" value="14-3-3_domain"/>
</dbReference>
<dbReference type="PANTHER" id="PTHR18860">
    <property type="entry name" value="14-3-3 PROTEIN"/>
    <property type="match status" value="1"/>
</dbReference>
<dbReference type="Pfam" id="PF00244">
    <property type="entry name" value="14-3-3"/>
    <property type="match status" value="1"/>
</dbReference>
<dbReference type="PIRSF" id="PIRSF000868">
    <property type="entry name" value="14-3-3"/>
    <property type="match status" value="1"/>
</dbReference>
<dbReference type="PRINTS" id="PR00305">
    <property type="entry name" value="1433ZETA"/>
</dbReference>
<dbReference type="SMART" id="SM00101">
    <property type="entry name" value="14_3_3"/>
    <property type="match status" value="1"/>
</dbReference>
<dbReference type="SUPFAM" id="SSF48445">
    <property type="entry name" value="14-3-3 protein"/>
    <property type="match status" value="1"/>
</dbReference>
<dbReference type="PROSITE" id="PS00796">
    <property type="entry name" value="1433_1"/>
    <property type="match status" value="1"/>
</dbReference>
<dbReference type="PROSITE" id="PS00797">
    <property type="entry name" value="1433_2"/>
    <property type="match status" value="1"/>
</dbReference>
<feature type="chain" id="PRO_0000058683" description="14-3-3 protein 3">
    <location>
        <begin position="1"/>
        <end position="260"/>
    </location>
</feature>
<feature type="sequence conflict" description="In Ref. 3; AAA99430." evidence="1" ref="3">
    <original>I</original>
    <variation>V</variation>
    <location>
        <position position="73"/>
    </location>
</feature>
<feature type="sequence conflict" description="In Ref. 3; AAA99430." evidence="1" ref="3">
    <original>A</original>
    <variation>G</variation>
    <location>
        <position position="158"/>
    </location>
</feature>
<keyword id="KW-1185">Reference proteome</keyword>
<proteinExistence type="evidence at transcript level"/>
<evidence type="ECO:0000305" key="1"/>